<gene>
    <name evidence="6" type="primary">Cgref1</name>
    <name type="synonym">Cgr11</name>
</gene>
<accession>P97586</accession>
<feature type="signal peptide" evidence="1">
    <location>
        <begin position="1"/>
        <end position="21"/>
    </location>
</feature>
<feature type="chain" id="PRO_0000073876" description="Cell growth regulator with EF hand domain protein 1">
    <location>
        <begin position="22"/>
        <end position="281"/>
    </location>
</feature>
<feature type="domain" description="EF-hand 1" evidence="2">
    <location>
        <begin position="71"/>
        <end position="106"/>
    </location>
</feature>
<feature type="domain" description="EF-hand 2" evidence="2">
    <location>
        <begin position="115"/>
        <end position="150"/>
    </location>
</feature>
<feature type="region of interest" description="Disordered" evidence="3">
    <location>
        <begin position="146"/>
        <end position="281"/>
    </location>
</feature>
<feature type="compositionally biased region" description="Polar residues" evidence="3">
    <location>
        <begin position="169"/>
        <end position="184"/>
    </location>
</feature>
<feature type="compositionally biased region" description="Basic and acidic residues" evidence="3">
    <location>
        <begin position="185"/>
        <end position="213"/>
    </location>
</feature>
<feature type="compositionally biased region" description="Basic and acidic residues" evidence="3">
    <location>
        <begin position="234"/>
        <end position="256"/>
    </location>
</feature>
<feature type="binding site" evidence="2">
    <location>
        <position position="84"/>
    </location>
    <ligand>
        <name>Ca(2+)</name>
        <dbReference type="ChEBI" id="CHEBI:29108"/>
        <label>1</label>
    </ligand>
</feature>
<feature type="binding site" evidence="2">
    <location>
        <position position="86"/>
    </location>
    <ligand>
        <name>Ca(2+)</name>
        <dbReference type="ChEBI" id="CHEBI:29108"/>
        <label>1</label>
    </ligand>
</feature>
<feature type="binding site" evidence="2">
    <location>
        <position position="88"/>
    </location>
    <ligand>
        <name>Ca(2+)</name>
        <dbReference type="ChEBI" id="CHEBI:29108"/>
        <label>1</label>
    </ligand>
</feature>
<feature type="binding site" evidence="2">
    <location>
        <position position="90"/>
    </location>
    <ligand>
        <name>Ca(2+)</name>
        <dbReference type="ChEBI" id="CHEBI:29108"/>
        <label>1</label>
    </ligand>
</feature>
<feature type="binding site" evidence="2">
    <location>
        <position position="95"/>
    </location>
    <ligand>
        <name>Ca(2+)</name>
        <dbReference type="ChEBI" id="CHEBI:29108"/>
        <label>1</label>
    </ligand>
</feature>
<feature type="binding site" evidence="2">
    <location>
        <position position="128"/>
    </location>
    <ligand>
        <name>Ca(2+)</name>
        <dbReference type="ChEBI" id="CHEBI:29108"/>
        <label>2</label>
    </ligand>
</feature>
<feature type="binding site" evidence="2">
    <location>
        <position position="130"/>
    </location>
    <ligand>
        <name>Ca(2+)</name>
        <dbReference type="ChEBI" id="CHEBI:29108"/>
        <label>2</label>
    </ligand>
</feature>
<feature type="binding site" evidence="2">
    <location>
        <position position="132"/>
    </location>
    <ligand>
        <name>Ca(2+)</name>
        <dbReference type="ChEBI" id="CHEBI:29108"/>
        <label>2</label>
    </ligand>
</feature>
<feature type="binding site" evidence="2">
    <location>
        <position position="139"/>
    </location>
    <ligand>
        <name>Ca(2+)</name>
        <dbReference type="ChEBI" id="CHEBI:29108"/>
        <label>2</label>
    </ligand>
</feature>
<feature type="modified residue" description="Phosphoserine" evidence="7">
    <location>
        <position position="217"/>
    </location>
</feature>
<feature type="modified residue" description="Phosphoserine" evidence="7">
    <location>
        <position position="228"/>
    </location>
</feature>
<protein>
    <recommendedName>
        <fullName evidence="5">Cell growth regulator with EF hand domain protein 1</fullName>
    </recommendedName>
    <alternativeName>
        <fullName>Cell growth regulatory gene 11 protein</fullName>
    </alternativeName>
    <alternativeName>
        <fullName>Hydrophobestin</fullName>
    </alternativeName>
</protein>
<comment type="function">
    <text evidence="4">Mediates cell-cell adhesion in a calcium-dependent manner. Able to inhibit growth in several cell lines.</text>
</comment>
<comment type="subcellular location">
    <subcellularLocation>
        <location evidence="4">Secreted</location>
    </subcellularLocation>
</comment>
<comment type="tissue specificity">
    <text evidence="4">Expressed predominantly in whole brain and kidney, with limited expression in heart, lung, liver, and skeletal muscle and no expression in spleen and testis. Also expressed in pituitary gland, adrenal gland, digestive tract, and reproductive organs.</text>
</comment>
<comment type="induction">
    <text>By p53.</text>
</comment>
<comment type="domain">
    <text>Both EF-hands are required for function.</text>
</comment>
<comment type="PTM">
    <text>Probably digested extracellularly by an unknown serine protease generating extremely hydrophobic bioactive peptides.</text>
</comment>
<reference key="1">
    <citation type="journal article" date="1996" name="Cancer Res.">
        <title>Induction of cell growth regulatory genes by p53.</title>
        <authorList>
            <person name="Madden S.L."/>
            <person name="Galella E.A."/>
            <person name="Riley D."/>
            <person name="Bertelsen A.H."/>
            <person name="Beaudry G.A."/>
        </authorList>
    </citation>
    <scope>NUCLEOTIDE SEQUENCE [MRNA]</scope>
    <source>
        <strain>Fischer</strain>
        <tissue>Fibroblast</tissue>
    </source>
</reference>
<reference key="2">
    <citation type="journal article" date="2009" name="Eur. J. Cell Biol.">
        <title>Cgr11 encodes a secretory protein involved in cell adhesion.</title>
        <authorList>
            <person name="Devnath S."/>
            <person name="Kataoka T."/>
            <person name="Miura K."/>
            <person name="Kusuda M."/>
            <person name="Kitamura K."/>
            <person name="Kumada Y."/>
            <person name="Mochiduki A."/>
            <person name="Kaneko K."/>
            <person name="Adachi A."/>
            <person name="Inoue K."/>
        </authorList>
    </citation>
    <scope>FUNCTION</scope>
    <scope>CALCIUM-BINDING</scope>
    <scope>SUBCELLULAR LOCATION</scope>
    <scope>PTM</scope>
    <scope>TISSUE SPECIFICITY</scope>
</reference>
<reference key="3">
    <citation type="journal article" date="2012" name="Nat. Commun.">
        <title>Quantitative maps of protein phosphorylation sites across 14 different rat organs and tissues.</title>
        <authorList>
            <person name="Lundby A."/>
            <person name="Secher A."/>
            <person name="Lage K."/>
            <person name="Nordsborg N.B."/>
            <person name="Dmytriyev A."/>
            <person name="Lundby C."/>
            <person name="Olsen J.V."/>
        </authorList>
    </citation>
    <scope>PHOSPHORYLATION [LARGE SCALE ANALYSIS] AT SER-217 AND SER-228</scope>
    <scope>IDENTIFICATION BY MASS SPECTROMETRY [LARGE SCALE ANALYSIS]</scope>
</reference>
<name>CGRE1_RAT</name>
<keyword id="KW-0106">Calcium</keyword>
<keyword id="KW-0130">Cell adhesion</keyword>
<keyword id="KW-0131">Cell cycle</keyword>
<keyword id="KW-0338">Growth arrest</keyword>
<keyword id="KW-0479">Metal-binding</keyword>
<keyword id="KW-0597">Phosphoprotein</keyword>
<keyword id="KW-1185">Reference proteome</keyword>
<keyword id="KW-0677">Repeat</keyword>
<keyword id="KW-0964">Secreted</keyword>
<keyword id="KW-0732">Signal</keyword>
<proteinExistence type="evidence at protein level"/>
<evidence type="ECO:0000255" key="1"/>
<evidence type="ECO:0000255" key="2">
    <source>
        <dbReference type="PROSITE-ProRule" id="PRU00448"/>
    </source>
</evidence>
<evidence type="ECO:0000256" key="3">
    <source>
        <dbReference type="SAM" id="MobiDB-lite"/>
    </source>
</evidence>
<evidence type="ECO:0000269" key="4">
    <source>
    </source>
</evidence>
<evidence type="ECO:0000305" key="5"/>
<evidence type="ECO:0000312" key="6">
    <source>
        <dbReference type="RGD" id="620801"/>
    </source>
</evidence>
<evidence type="ECO:0007744" key="7">
    <source>
    </source>
</evidence>
<sequence>MSRWLMQMLMLPLLLLPLGQAAPKDGVARLDPEAQQQLTTNPFQPGPEQLRRLRDYLKGLEKMEEDPEQMNREQVLLYLFALHDFDQNGQLDGLELLSMLTAALAPGAAHFPINPVILVVDMVLETQDLDGDGLMTPAELINFPGEAPKRAESLPPALQEPQPAGSQPLLANSPLQSETQQSLGTKEEITSQVEAKRALEPEQEAGHHIETKVDALSPEGEARGQAESEGDAPGPREDAERQVESKDNEGEAKDLPAETLETQNTPNVVEAHSIQLENDEI</sequence>
<organism>
    <name type="scientific">Rattus norvegicus</name>
    <name type="common">Rat</name>
    <dbReference type="NCBI Taxonomy" id="10116"/>
    <lineage>
        <taxon>Eukaryota</taxon>
        <taxon>Metazoa</taxon>
        <taxon>Chordata</taxon>
        <taxon>Craniata</taxon>
        <taxon>Vertebrata</taxon>
        <taxon>Euteleostomi</taxon>
        <taxon>Mammalia</taxon>
        <taxon>Eutheria</taxon>
        <taxon>Euarchontoglires</taxon>
        <taxon>Glires</taxon>
        <taxon>Rodentia</taxon>
        <taxon>Myomorpha</taxon>
        <taxon>Muroidea</taxon>
        <taxon>Muridae</taxon>
        <taxon>Murinae</taxon>
        <taxon>Rattus</taxon>
    </lineage>
</organism>
<dbReference type="EMBL" id="U66470">
    <property type="protein sequence ID" value="AAC52950.1"/>
    <property type="molecule type" value="mRNA"/>
</dbReference>
<dbReference type="RefSeq" id="NP_620787.2">
    <property type="nucleotide sequence ID" value="NM_139087.2"/>
</dbReference>
<dbReference type="SMR" id="P97586"/>
<dbReference type="FunCoup" id="P97586">
    <property type="interactions" value="100"/>
</dbReference>
<dbReference type="STRING" id="10116.ENSRNOP00000010586"/>
<dbReference type="iPTMnet" id="P97586"/>
<dbReference type="PhosphoSitePlus" id="P97586"/>
<dbReference type="jPOST" id="P97586"/>
<dbReference type="PaxDb" id="10116-ENSRNOP00000010586"/>
<dbReference type="GeneID" id="245918"/>
<dbReference type="KEGG" id="rno:245918"/>
<dbReference type="AGR" id="RGD:620801"/>
<dbReference type="CTD" id="10669"/>
<dbReference type="RGD" id="620801">
    <property type="gene designation" value="Cgref1"/>
</dbReference>
<dbReference type="eggNOG" id="ENOG502S2TZ">
    <property type="taxonomic scope" value="Eukaryota"/>
</dbReference>
<dbReference type="InParanoid" id="P97586"/>
<dbReference type="OrthoDB" id="289247at2759"/>
<dbReference type="PhylomeDB" id="P97586"/>
<dbReference type="TreeFam" id="TF315801"/>
<dbReference type="PRO" id="PR:P97586"/>
<dbReference type="Proteomes" id="UP000002494">
    <property type="component" value="Unplaced"/>
</dbReference>
<dbReference type="GO" id="GO:0005576">
    <property type="term" value="C:extracellular region"/>
    <property type="evidence" value="ECO:0007669"/>
    <property type="project" value="UniProtKB-SubCell"/>
</dbReference>
<dbReference type="GO" id="GO:0005509">
    <property type="term" value="F:calcium ion binding"/>
    <property type="evidence" value="ECO:0007669"/>
    <property type="project" value="InterPro"/>
</dbReference>
<dbReference type="GO" id="GO:0007155">
    <property type="term" value="P:cell adhesion"/>
    <property type="evidence" value="ECO:0007669"/>
    <property type="project" value="UniProtKB-KW"/>
</dbReference>
<dbReference type="GO" id="GO:0030308">
    <property type="term" value="P:negative regulation of cell growth"/>
    <property type="evidence" value="ECO:0000314"/>
    <property type="project" value="RGD"/>
</dbReference>
<dbReference type="GO" id="GO:0051726">
    <property type="term" value="P:regulation of cell cycle"/>
    <property type="evidence" value="ECO:0007669"/>
    <property type="project" value="UniProtKB-KW"/>
</dbReference>
<dbReference type="FunFam" id="1.10.238.10:FF:000184">
    <property type="entry name" value="cell growth regulator with EF hand domain protein 1"/>
    <property type="match status" value="1"/>
</dbReference>
<dbReference type="Gene3D" id="1.10.238.10">
    <property type="entry name" value="EF-hand"/>
    <property type="match status" value="1"/>
</dbReference>
<dbReference type="InterPro" id="IPR011992">
    <property type="entry name" value="EF-hand-dom_pair"/>
</dbReference>
<dbReference type="InterPro" id="IPR018247">
    <property type="entry name" value="EF_Hand_1_Ca_BS"/>
</dbReference>
<dbReference type="InterPro" id="IPR002048">
    <property type="entry name" value="EF_hand_dom"/>
</dbReference>
<dbReference type="InterPro" id="IPR052110">
    <property type="entry name" value="ER-Golgi_Adhesion_Reg"/>
</dbReference>
<dbReference type="PANTHER" id="PTHR23104:SF15">
    <property type="entry name" value="CELL GROWTH REGULATOR WITH EF HAND DOMAIN PROTEIN 1"/>
    <property type="match status" value="1"/>
</dbReference>
<dbReference type="PANTHER" id="PTHR23104">
    <property type="entry name" value="MULTIPLE COAGULATION FACTOR DEFICIENCY PROTEIN 2 NEURAL STEM CELL DERIVED NEURONAL SURVIVAL PROTEIN"/>
    <property type="match status" value="1"/>
</dbReference>
<dbReference type="SUPFAM" id="SSF47473">
    <property type="entry name" value="EF-hand"/>
    <property type="match status" value="1"/>
</dbReference>
<dbReference type="PROSITE" id="PS00018">
    <property type="entry name" value="EF_HAND_1"/>
    <property type="match status" value="2"/>
</dbReference>
<dbReference type="PROSITE" id="PS50222">
    <property type="entry name" value="EF_HAND_2"/>
    <property type="match status" value="2"/>
</dbReference>